<dbReference type="EMBL" id="BX950851">
    <property type="protein sequence ID" value="CAG74047.1"/>
    <property type="molecule type" value="Genomic_DNA"/>
</dbReference>
<dbReference type="RefSeq" id="WP_011092731.1">
    <property type="nucleotide sequence ID" value="NC_004547.2"/>
</dbReference>
<dbReference type="SMR" id="Q6D838"/>
<dbReference type="STRING" id="218491.ECA1137"/>
<dbReference type="KEGG" id="eca:ECA1137"/>
<dbReference type="eggNOG" id="COG1666">
    <property type="taxonomic scope" value="Bacteria"/>
</dbReference>
<dbReference type="HOGENOM" id="CLU_099839_1_0_6"/>
<dbReference type="OrthoDB" id="9801447at2"/>
<dbReference type="Proteomes" id="UP000007966">
    <property type="component" value="Chromosome"/>
</dbReference>
<dbReference type="GO" id="GO:0005829">
    <property type="term" value="C:cytosol"/>
    <property type="evidence" value="ECO:0007669"/>
    <property type="project" value="TreeGrafter"/>
</dbReference>
<dbReference type="GO" id="GO:0000166">
    <property type="term" value="F:nucleotide binding"/>
    <property type="evidence" value="ECO:0007669"/>
    <property type="project" value="TreeGrafter"/>
</dbReference>
<dbReference type="CDD" id="cd11740">
    <property type="entry name" value="YajQ_like"/>
    <property type="match status" value="1"/>
</dbReference>
<dbReference type="FunFam" id="3.30.70.860:FF:000001">
    <property type="entry name" value="UPF0234 protein YajQ"/>
    <property type="match status" value="1"/>
</dbReference>
<dbReference type="FunFam" id="3.30.70.990:FF:000001">
    <property type="entry name" value="UPF0234 protein YajQ"/>
    <property type="match status" value="1"/>
</dbReference>
<dbReference type="Gene3D" id="3.30.70.860">
    <property type="match status" value="1"/>
</dbReference>
<dbReference type="Gene3D" id="3.30.70.990">
    <property type="entry name" value="YajQ-like, domain 2"/>
    <property type="match status" value="1"/>
</dbReference>
<dbReference type="HAMAP" id="MF_00632">
    <property type="entry name" value="YajQ"/>
    <property type="match status" value="1"/>
</dbReference>
<dbReference type="InterPro" id="IPR007551">
    <property type="entry name" value="DUF520"/>
</dbReference>
<dbReference type="InterPro" id="IPR035571">
    <property type="entry name" value="UPF0234-like_C"/>
</dbReference>
<dbReference type="InterPro" id="IPR035570">
    <property type="entry name" value="UPF0234_N"/>
</dbReference>
<dbReference type="InterPro" id="IPR036183">
    <property type="entry name" value="YajQ-like_sf"/>
</dbReference>
<dbReference type="NCBIfam" id="NF003819">
    <property type="entry name" value="PRK05412.1"/>
    <property type="match status" value="1"/>
</dbReference>
<dbReference type="PANTHER" id="PTHR30476">
    <property type="entry name" value="UPF0234 PROTEIN YAJQ"/>
    <property type="match status" value="1"/>
</dbReference>
<dbReference type="PANTHER" id="PTHR30476:SF0">
    <property type="entry name" value="UPF0234 PROTEIN YAJQ"/>
    <property type="match status" value="1"/>
</dbReference>
<dbReference type="Pfam" id="PF04461">
    <property type="entry name" value="DUF520"/>
    <property type="match status" value="1"/>
</dbReference>
<dbReference type="SUPFAM" id="SSF89963">
    <property type="entry name" value="YajQ-like"/>
    <property type="match status" value="2"/>
</dbReference>
<keyword id="KW-0547">Nucleotide-binding</keyword>
<keyword id="KW-1185">Reference proteome</keyword>
<protein>
    <recommendedName>
        <fullName evidence="1">Nucleotide-binding protein ECA1137</fullName>
    </recommendedName>
</protein>
<accession>Q6D838</accession>
<organism>
    <name type="scientific">Pectobacterium atrosepticum (strain SCRI 1043 / ATCC BAA-672)</name>
    <name type="common">Erwinia carotovora subsp. atroseptica</name>
    <dbReference type="NCBI Taxonomy" id="218491"/>
    <lineage>
        <taxon>Bacteria</taxon>
        <taxon>Pseudomonadati</taxon>
        <taxon>Pseudomonadota</taxon>
        <taxon>Gammaproteobacteria</taxon>
        <taxon>Enterobacterales</taxon>
        <taxon>Pectobacteriaceae</taxon>
        <taxon>Pectobacterium</taxon>
    </lineage>
</organism>
<sequence length="163" mass="18364">MPSFDIVSEIDMQEVRNAVENATRDLSTRWDFRNVPASFELNEKSQSIKVASESDFQVQQLVDILREKLVKRGIEGGALEIPEEMEHSGKTYSVEAKLKQGIETTLAKQLIKLIKDSKLKVQAQIQGEQVRVTGKARDDLQGVMALIRGGNLGQPFQFTNFRD</sequence>
<reference key="1">
    <citation type="journal article" date="2004" name="Proc. Natl. Acad. Sci. U.S.A.">
        <title>Genome sequence of the enterobacterial phytopathogen Erwinia carotovora subsp. atroseptica and characterization of virulence factors.</title>
        <authorList>
            <person name="Bell K.S."/>
            <person name="Sebaihia M."/>
            <person name="Pritchard L."/>
            <person name="Holden M.T.G."/>
            <person name="Hyman L.J."/>
            <person name="Holeva M.C."/>
            <person name="Thomson N.R."/>
            <person name="Bentley S.D."/>
            <person name="Churcher L.J.C."/>
            <person name="Mungall K."/>
            <person name="Atkin R."/>
            <person name="Bason N."/>
            <person name="Brooks K."/>
            <person name="Chillingworth T."/>
            <person name="Clark K."/>
            <person name="Doggett J."/>
            <person name="Fraser A."/>
            <person name="Hance Z."/>
            <person name="Hauser H."/>
            <person name="Jagels K."/>
            <person name="Moule S."/>
            <person name="Norbertczak H."/>
            <person name="Ormond D."/>
            <person name="Price C."/>
            <person name="Quail M.A."/>
            <person name="Sanders M."/>
            <person name="Walker D."/>
            <person name="Whitehead S."/>
            <person name="Salmond G.P.C."/>
            <person name="Birch P.R.J."/>
            <person name="Parkhill J."/>
            <person name="Toth I.K."/>
        </authorList>
    </citation>
    <scope>NUCLEOTIDE SEQUENCE [LARGE SCALE GENOMIC DNA]</scope>
    <source>
        <strain>SCRI 1043 / ATCC BAA-672</strain>
    </source>
</reference>
<feature type="chain" id="PRO_0000261934" description="Nucleotide-binding protein ECA1137">
    <location>
        <begin position="1"/>
        <end position="163"/>
    </location>
</feature>
<proteinExistence type="inferred from homology"/>
<name>Y1137_PECAS</name>
<comment type="function">
    <text evidence="1">Nucleotide-binding protein.</text>
</comment>
<comment type="similarity">
    <text evidence="1">Belongs to the YajQ family.</text>
</comment>
<gene>
    <name type="ordered locus">ECA1137</name>
</gene>
<evidence type="ECO:0000255" key="1">
    <source>
        <dbReference type="HAMAP-Rule" id="MF_00632"/>
    </source>
</evidence>